<evidence type="ECO:0000255" key="1">
    <source>
        <dbReference type="HAMAP-Rule" id="MF_01547"/>
    </source>
</evidence>
<evidence type="ECO:0000305" key="2"/>
<name>RLME_BORAP</name>
<comment type="function">
    <text evidence="1">Specifically methylates the uridine in position 2552 of 23S rRNA at the 2'-O position of the ribose in the fully assembled 50S ribosomal subunit.</text>
</comment>
<comment type="catalytic activity">
    <reaction evidence="1">
        <text>uridine(2552) in 23S rRNA + S-adenosyl-L-methionine = 2'-O-methyluridine(2552) in 23S rRNA + S-adenosyl-L-homocysteine + H(+)</text>
        <dbReference type="Rhea" id="RHEA:42720"/>
        <dbReference type="Rhea" id="RHEA-COMP:10202"/>
        <dbReference type="Rhea" id="RHEA-COMP:10203"/>
        <dbReference type="ChEBI" id="CHEBI:15378"/>
        <dbReference type="ChEBI" id="CHEBI:57856"/>
        <dbReference type="ChEBI" id="CHEBI:59789"/>
        <dbReference type="ChEBI" id="CHEBI:65315"/>
        <dbReference type="ChEBI" id="CHEBI:74478"/>
        <dbReference type="EC" id="2.1.1.166"/>
    </reaction>
</comment>
<comment type="subcellular location">
    <subcellularLocation>
        <location evidence="1">Cytoplasm</location>
    </subcellularLocation>
</comment>
<comment type="similarity">
    <text evidence="1">Belongs to the class I-like SAM-binding methyltransferase superfamily. RNA methyltransferase RlmE family.</text>
</comment>
<comment type="sequence caution" evidence="2">
    <conflict type="erroneous initiation">
        <sequence resource="EMBL-CDS" id="AEL69540"/>
    </conflict>
    <text>Extended N-terminus.</text>
</comment>
<keyword id="KW-0963">Cytoplasm</keyword>
<keyword id="KW-0489">Methyltransferase</keyword>
<keyword id="KW-0698">rRNA processing</keyword>
<keyword id="KW-0949">S-adenosyl-L-methionine</keyword>
<keyword id="KW-0808">Transferase</keyword>
<organism>
    <name type="scientific">Borreliella afzelii (strain PKo)</name>
    <name type="common">Borrelia afzelii</name>
    <dbReference type="NCBI Taxonomy" id="390236"/>
    <lineage>
        <taxon>Bacteria</taxon>
        <taxon>Pseudomonadati</taxon>
        <taxon>Spirochaetota</taxon>
        <taxon>Spirochaetia</taxon>
        <taxon>Spirochaetales</taxon>
        <taxon>Borreliaceae</taxon>
        <taxon>Borreliella</taxon>
    </lineage>
</organism>
<sequence>MNDEYSQKAKREGYLARSVYKLIEINEKFSLFSYGNVLDIGASPGSFSQYAYKKLKRGILVAVDINDIGLRHVDNFYFVKGDIFSDDTVFKINTLGPYSLVISDAAPRTTGNRLVDTSNSFNLSMRIIDLSLEVLIKKGNLLVKVFQGGDEIQIFKKFEKYFKFVKKIRPKAVRKNSFEIYFLGKSFGK</sequence>
<feature type="chain" id="PRO_0000282729" description="Ribosomal RNA large subunit methyltransferase E">
    <location>
        <begin position="1"/>
        <end position="189"/>
    </location>
</feature>
<feature type="active site" description="Proton acceptor" evidence="1">
    <location>
        <position position="144"/>
    </location>
</feature>
<feature type="binding site" evidence="1">
    <location>
        <position position="45"/>
    </location>
    <ligand>
        <name>S-adenosyl-L-methionine</name>
        <dbReference type="ChEBI" id="CHEBI:59789"/>
    </ligand>
</feature>
<feature type="binding site" evidence="1">
    <location>
        <position position="47"/>
    </location>
    <ligand>
        <name>S-adenosyl-L-methionine</name>
        <dbReference type="ChEBI" id="CHEBI:59789"/>
    </ligand>
</feature>
<feature type="binding site" evidence="1">
    <location>
        <position position="64"/>
    </location>
    <ligand>
        <name>S-adenosyl-L-methionine</name>
        <dbReference type="ChEBI" id="CHEBI:59789"/>
    </ligand>
</feature>
<feature type="binding site" evidence="1">
    <location>
        <position position="82"/>
    </location>
    <ligand>
        <name>S-adenosyl-L-methionine</name>
        <dbReference type="ChEBI" id="CHEBI:59789"/>
    </ligand>
</feature>
<feature type="binding site" evidence="1">
    <location>
        <position position="104"/>
    </location>
    <ligand>
        <name>S-adenosyl-L-methionine</name>
        <dbReference type="ChEBI" id="CHEBI:59789"/>
    </ligand>
</feature>
<reference key="1">
    <citation type="journal article" date="2006" name="BMC Genomics">
        <title>Comparative genome analysis: selection pressure on the Borrelia vls cassettes is essential for infectivity.</title>
        <authorList>
            <person name="Gloeckner G."/>
            <person name="Schulte-Spechtel U."/>
            <person name="Schilhabel M."/>
            <person name="Felder M."/>
            <person name="Suehnel J."/>
            <person name="Wilske B."/>
            <person name="Platzer M."/>
        </authorList>
    </citation>
    <scope>NUCLEOTIDE SEQUENCE [LARGE SCALE GENOMIC DNA]</scope>
    <source>
        <strain>PKo</strain>
    </source>
</reference>
<reference key="2">
    <citation type="journal article" date="2011" name="J. Bacteriol.">
        <title>Whole-genome sequences of two Borrelia afzelii and two Borrelia garinii Lyme disease agent isolates.</title>
        <authorList>
            <person name="Casjens S.R."/>
            <person name="Mongodin E.F."/>
            <person name="Qiu W.G."/>
            <person name="Dunn J.J."/>
            <person name="Luft B.J."/>
            <person name="Fraser-Liggett C.M."/>
            <person name="Schutzer S.E."/>
        </authorList>
    </citation>
    <scope>NUCLEOTIDE SEQUENCE [LARGE SCALE GENOMIC DNA]</scope>
    <source>
        <strain>PKo</strain>
    </source>
</reference>
<protein>
    <recommendedName>
        <fullName evidence="1">Ribosomal RNA large subunit methyltransferase E</fullName>
        <ecNumber evidence="1">2.1.1.166</ecNumber>
    </recommendedName>
    <alternativeName>
        <fullName evidence="1">23S rRNA Um2552 methyltransferase</fullName>
    </alternativeName>
    <alternativeName>
        <fullName evidence="1">rRNA (uridine-2'-O-)-methyltransferase</fullName>
    </alternativeName>
</protein>
<dbReference type="EC" id="2.1.1.166" evidence="1"/>
<dbReference type="EMBL" id="CP000395">
    <property type="protein sequence ID" value="ABH01580.1"/>
    <property type="molecule type" value="Genomic_DNA"/>
</dbReference>
<dbReference type="EMBL" id="CP002933">
    <property type="protein sequence ID" value="AEL69540.1"/>
    <property type="status" value="ALT_INIT"/>
    <property type="molecule type" value="Genomic_DNA"/>
</dbReference>
<dbReference type="RefSeq" id="WP_014486364.1">
    <property type="nucleotide sequence ID" value="NZ_CP160066.1"/>
</dbReference>
<dbReference type="SMR" id="Q0SNJ8"/>
<dbReference type="STRING" id="29518.BLA32_02735"/>
<dbReference type="KEGG" id="baf:BAPKO_0323"/>
<dbReference type="KEGG" id="bafz:BafPKo_0314"/>
<dbReference type="PATRIC" id="fig|390236.22.peg.308"/>
<dbReference type="eggNOG" id="COG0293">
    <property type="taxonomic scope" value="Bacteria"/>
</dbReference>
<dbReference type="HOGENOM" id="CLU_009422_4_4_12"/>
<dbReference type="OrthoDB" id="154490at2"/>
<dbReference type="Proteomes" id="UP000005216">
    <property type="component" value="Chromosome"/>
</dbReference>
<dbReference type="GO" id="GO:0005737">
    <property type="term" value="C:cytoplasm"/>
    <property type="evidence" value="ECO:0007669"/>
    <property type="project" value="UniProtKB-SubCell"/>
</dbReference>
<dbReference type="GO" id="GO:0008650">
    <property type="term" value="F:rRNA (uridine-2'-O-)-methyltransferase activity"/>
    <property type="evidence" value="ECO:0007669"/>
    <property type="project" value="UniProtKB-UniRule"/>
</dbReference>
<dbReference type="Gene3D" id="3.40.50.150">
    <property type="entry name" value="Vaccinia Virus protein VP39"/>
    <property type="match status" value="1"/>
</dbReference>
<dbReference type="HAMAP" id="MF_01547">
    <property type="entry name" value="RNA_methyltr_E"/>
    <property type="match status" value="1"/>
</dbReference>
<dbReference type="InterPro" id="IPR050082">
    <property type="entry name" value="RNA_methyltr_RlmE"/>
</dbReference>
<dbReference type="InterPro" id="IPR002877">
    <property type="entry name" value="RNA_MeTrfase_FtsJ_dom"/>
</dbReference>
<dbReference type="InterPro" id="IPR015507">
    <property type="entry name" value="rRNA-MeTfrase_E"/>
</dbReference>
<dbReference type="InterPro" id="IPR029063">
    <property type="entry name" value="SAM-dependent_MTases_sf"/>
</dbReference>
<dbReference type="PANTHER" id="PTHR10920">
    <property type="entry name" value="RIBOSOMAL RNA METHYLTRANSFERASE"/>
    <property type="match status" value="1"/>
</dbReference>
<dbReference type="PANTHER" id="PTHR10920:SF18">
    <property type="entry name" value="RRNA METHYLTRANSFERASE 2, MITOCHONDRIAL"/>
    <property type="match status" value="1"/>
</dbReference>
<dbReference type="Pfam" id="PF01728">
    <property type="entry name" value="FtsJ"/>
    <property type="match status" value="1"/>
</dbReference>
<dbReference type="PIRSF" id="PIRSF005461">
    <property type="entry name" value="23S_rRNA_mtase"/>
    <property type="match status" value="1"/>
</dbReference>
<dbReference type="SUPFAM" id="SSF53335">
    <property type="entry name" value="S-adenosyl-L-methionine-dependent methyltransferases"/>
    <property type="match status" value="1"/>
</dbReference>
<accession>Q0SNJ8</accession>
<accession>G0IRN0</accession>
<proteinExistence type="inferred from homology"/>
<gene>
    <name evidence="1" type="primary">rlmE</name>
    <name evidence="1" type="synonym">ftsJ</name>
    <name evidence="1" type="synonym">rrmJ</name>
    <name type="ordered locus">BAPKO_0323</name>
    <name type="ordered locus">BafPKo_0314</name>
</gene>